<proteinExistence type="inferred from homology"/>
<feature type="chain" id="PRO_0000457330" description="Mitochondrial citrate transporter C">
    <location>
        <begin position="1"/>
        <end position="325"/>
    </location>
</feature>
<feature type="transmembrane region" description="Helical; Name=1" evidence="1">
    <location>
        <begin position="21"/>
        <end position="41"/>
    </location>
</feature>
<feature type="transmembrane region" description="Helical; Name=2" evidence="1">
    <location>
        <begin position="82"/>
        <end position="102"/>
    </location>
</feature>
<feature type="transmembrane region" description="Helical; Name=3" evidence="1">
    <location>
        <begin position="121"/>
        <end position="141"/>
    </location>
</feature>
<feature type="transmembrane region" description="Helical; Name=4" evidence="1">
    <location>
        <begin position="187"/>
        <end position="207"/>
    </location>
</feature>
<feature type="transmembrane region" description="Helical; Name=5" evidence="1">
    <location>
        <begin position="221"/>
        <end position="241"/>
    </location>
</feature>
<feature type="transmembrane region" description="Helical; Name=6" evidence="1">
    <location>
        <begin position="282"/>
        <end position="303"/>
    </location>
</feature>
<feature type="repeat" description="Solcar 1" evidence="2">
    <location>
        <begin position="15"/>
        <end position="105"/>
    </location>
</feature>
<feature type="repeat" description="Solcar 2" evidence="2">
    <location>
        <begin position="117"/>
        <end position="208"/>
    </location>
</feature>
<feature type="repeat" description="Solcar 3" evidence="2">
    <location>
        <begin position="221"/>
        <end position="310"/>
    </location>
</feature>
<gene>
    <name evidence="4" type="primary">ctpC</name>
    <name type="ORF">ASPNIDRAFT_194825</name>
</gene>
<comment type="function">
    <text evidence="3">Mitochondrial transporter that does not mediate citrate export from mitochondria to cytoplasm (PubMed:36177470). Its exact function has still to be determined (PubMed:36177470).</text>
</comment>
<comment type="subcellular location">
    <subcellularLocation>
        <location evidence="6">Mitochondrion inner membrane</location>
        <topology evidence="1">Multi-pass membrane protein</topology>
    </subcellularLocation>
</comment>
<comment type="disruption phenotype">
    <text evidence="3">Leads to fluffy and albino colonies, and reduced conidia formation, when all 6 genes ctpA to ctpF are deleted.</text>
</comment>
<comment type="similarity">
    <text evidence="5">Belongs to the mitochondrial carrier (TC 2.A.29) family.</text>
</comment>
<accession>G3YAF3</accession>
<keyword id="KW-0472">Membrane</keyword>
<keyword id="KW-0496">Mitochondrion</keyword>
<keyword id="KW-0999">Mitochondrion inner membrane</keyword>
<keyword id="KW-0677">Repeat</keyword>
<keyword id="KW-1278">Translocase</keyword>
<keyword id="KW-0812">Transmembrane</keyword>
<keyword id="KW-1133">Transmembrane helix</keyword>
<keyword id="KW-0813">Transport</keyword>
<evidence type="ECO:0000255" key="1"/>
<evidence type="ECO:0000255" key="2">
    <source>
        <dbReference type="PROSITE-ProRule" id="PRU00282"/>
    </source>
</evidence>
<evidence type="ECO:0000269" key="3">
    <source>
    </source>
</evidence>
<evidence type="ECO:0000303" key="4">
    <source>
    </source>
</evidence>
<evidence type="ECO:0000305" key="5"/>
<evidence type="ECO:0000305" key="6">
    <source>
    </source>
</evidence>
<name>CTPC_ASPNA</name>
<dbReference type="EC" id="7.-.-.-" evidence="6"/>
<dbReference type="EMBL" id="ACJE01000017">
    <property type="protein sequence ID" value="EHA20281.1"/>
    <property type="molecule type" value="Genomic_DNA"/>
</dbReference>
<dbReference type="SMR" id="G3YAF3"/>
<dbReference type="STRING" id="380704.G3YAF3"/>
<dbReference type="VEuPathDB" id="FungiDB:ASPNIDRAFT2_1222809"/>
<dbReference type="HOGENOM" id="CLU_015166_5_0_1"/>
<dbReference type="OrthoDB" id="47902at5052"/>
<dbReference type="Proteomes" id="UP000009038">
    <property type="component" value="Unassembled WGS sequence"/>
</dbReference>
<dbReference type="GO" id="GO:0005743">
    <property type="term" value="C:mitochondrial inner membrane"/>
    <property type="evidence" value="ECO:0007669"/>
    <property type="project" value="UniProtKB-SubCell"/>
</dbReference>
<dbReference type="GO" id="GO:0005469">
    <property type="term" value="F:succinate:fumarate antiporter activity"/>
    <property type="evidence" value="ECO:0007669"/>
    <property type="project" value="TreeGrafter"/>
</dbReference>
<dbReference type="FunFam" id="1.50.40.10:FF:000021">
    <property type="entry name" value="SFC1p Mitochondrial succinate-fumarate transporter"/>
    <property type="match status" value="1"/>
</dbReference>
<dbReference type="Gene3D" id="1.50.40.10">
    <property type="entry name" value="Mitochondrial carrier domain"/>
    <property type="match status" value="1"/>
</dbReference>
<dbReference type="InterPro" id="IPR002067">
    <property type="entry name" value="Mit_carrier"/>
</dbReference>
<dbReference type="InterPro" id="IPR018108">
    <property type="entry name" value="Mitochondrial_sb/sol_carrier"/>
</dbReference>
<dbReference type="InterPro" id="IPR023395">
    <property type="entry name" value="Mt_carrier_dom_sf"/>
</dbReference>
<dbReference type="InterPro" id="IPR049563">
    <property type="entry name" value="TXTP-like"/>
</dbReference>
<dbReference type="PANTHER" id="PTHR45788">
    <property type="entry name" value="SUCCINATE/FUMARATE MITOCHONDRIAL TRANSPORTER-RELATED"/>
    <property type="match status" value="1"/>
</dbReference>
<dbReference type="PANTHER" id="PTHR45788:SF2">
    <property type="entry name" value="SUCCINATE_FUMARATE MITOCHONDRIAL TRANSPORTER"/>
    <property type="match status" value="1"/>
</dbReference>
<dbReference type="Pfam" id="PF00153">
    <property type="entry name" value="Mito_carr"/>
    <property type="match status" value="3"/>
</dbReference>
<dbReference type="PRINTS" id="PR00926">
    <property type="entry name" value="MITOCARRIER"/>
</dbReference>
<dbReference type="SUPFAM" id="SSF103506">
    <property type="entry name" value="Mitochondrial carrier"/>
    <property type="match status" value="1"/>
</dbReference>
<dbReference type="PROSITE" id="PS50920">
    <property type="entry name" value="SOLCAR"/>
    <property type="match status" value="3"/>
</dbReference>
<protein>
    <recommendedName>
        <fullName evidence="4">Mitochondrial citrate transporter C</fullName>
        <ecNumber evidence="6">7.-.-.-</ecNumber>
    </recommendedName>
</protein>
<sequence>MSAKTVQGRNGKKPASPAVNLIAGGGAGMMEALVCHPLDTIKVRMQLSRRARAPGVKPRGFVATGVEIVKKETAMGLYKGLGAVLGGIIPKMAIRFTSYESYKQMLADKETGAVTSKATFLAGLAAGVTEAVAVVNPMEVVKIRLQAQHHSLADPLDTPKYRSAPHALFTVIKEEGFSTLYRGVSLTALRQGTNQAANFTAYTELKAFLQRVQPEYSNTQLPSYQTTFIGLISGAVGPFSNAPIDTIKTRLQKTRAEPGQSAVSRIMVIAKDMFKQEGARAFYKGITPRVMRVAPGQAVTFTVYEFLKGKLENSGWAFVGGNYEE</sequence>
<organism>
    <name type="scientific">Aspergillus niger (strain ATCC 1015 / CBS 113.46 / FGSC A1144 / LSHB Ac4 / NCTC 3858a / NRRL 328 / USDA 3528.7)</name>
    <dbReference type="NCBI Taxonomy" id="380704"/>
    <lineage>
        <taxon>Eukaryota</taxon>
        <taxon>Fungi</taxon>
        <taxon>Dikarya</taxon>
        <taxon>Ascomycota</taxon>
        <taxon>Pezizomycotina</taxon>
        <taxon>Eurotiomycetes</taxon>
        <taxon>Eurotiomycetidae</taxon>
        <taxon>Eurotiales</taxon>
        <taxon>Aspergillaceae</taxon>
        <taxon>Aspergillus</taxon>
        <taxon>Aspergillus subgen. Circumdati</taxon>
    </lineage>
</organism>
<reference key="1">
    <citation type="journal article" date="2011" name="Genome Res.">
        <title>Comparative genomics of citric-acid-producing Aspergillus niger ATCC 1015 versus enzyme-producing CBS 513.88.</title>
        <authorList>
            <person name="Andersen M.R."/>
            <person name="Salazar M.P."/>
            <person name="Schaap P.J."/>
            <person name="van de Vondervoort P.J.I."/>
            <person name="Culley D."/>
            <person name="Thykaer J."/>
            <person name="Frisvad J.C."/>
            <person name="Nielsen K.F."/>
            <person name="Albang R."/>
            <person name="Albermann K."/>
            <person name="Berka R.M."/>
            <person name="Braus G.H."/>
            <person name="Braus-Stromeyer S.A."/>
            <person name="Corrochano L.M."/>
            <person name="Dai Z."/>
            <person name="van Dijck P.W.M."/>
            <person name="Hofmann G."/>
            <person name="Lasure L.L."/>
            <person name="Magnuson J.K."/>
            <person name="Menke H."/>
            <person name="Meijer M."/>
            <person name="Meijer S.L."/>
            <person name="Nielsen J.B."/>
            <person name="Nielsen M.L."/>
            <person name="van Ooyen A.J.J."/>
            <person name="Pel H.J."/>
            <person name="Poulsen L."/>
            <person name="Samson R.A."/>
            <person name="Stam H."/>
            <person name="Tsang A."/>
            <person name="van den Brink J.M."/>
            <person name="Atkins A."/>
            <person name="Aerts A."/>
            <person name="Shapiro H."/>
            <person name="Pangilinan J."/>
            <person name="Salamov A."/>
            <person name="Lou Y."/>
            <person name="Lindquist E."/>
            <person name="Lucas S."/>
            <person name="Grimwood J."/>
            <person name="Grigoriev I.V."/>
            <person name="Kubicek C.P."/>
            <person name="Martinez D."/>
            <person name="van Peij N.N.M.E."/>
            <person name="Roubos J.A."/>
            <person name="Nielsen J."/>
            <person name="Baker S.E."/>
        </authorList>
    </citation>
    <scope>NUCLEOTIDE SEQUENCE [LARGE SCALE GENOMIC DNA]</scope>
    <source>
        <strain>ATCC 1015 / CBS 113.46 / FGSC A1144 / LSHB Ac4 / NCTC 3858a / NRRL 328 / USDA 3528.7</strain>
    </source>
</reference>
<reference key="2">
    <citation type="journal article" date="2022" name="Front. Microbiol.">
        <title>Identification and genetic characterization of mitochondrial citrate transporters in Aspergillus niger.</title>
        <authorList>
            <person name="Cao W."/>
            <person name="Zhang L."/>
            <person name="Wu L."/>
            <person name="Zhang M."/>
            <person name="Liu J."/>
            <person name="Xie Z."/>
            <person name="Liu H."/>
        </authorList>
    </citation>
    <scope>FUNCTION</scope>
    <scope>DISRUPTION PHENOTYPE</scope>
</reference>